<comment type="function">
    <text>May transfer electrons to the iron-sulfur centers of ClrB.</text>
</comment>
<comment type="cofactor">
    <cofactor evidence="2">
        <name>heme b</name>
        <dbReference type="ChEBI" id="CHEBI:60344"/>
    </cofactor>
    <text evidence="2">Binds 1 heme b (iron(II)-protoporphyrin IX) group per subunit.</text>
</comment>
<comment type="subunit">
    <text>Heterotrimer of alpha, beta and gamma subunits.</text>
</comment>
<comment type="subcellular location">
    <subcellularLocation>
        <location>Periplasm</location>
    </subcellularLocation>
</comment>
<comment type="biotechnology">
    <text>Has potential use in bioremediation of waste sites contaminated with chlorate, such as pulp and paper industry wastewater.</text>
</comment>
<organism>
    <name type="scientific">Ideonella dechloratans</name>
    <dbReference type="NCBI Taxonomy" id="36863"/>
    <lineage>
        <taxon>Bacteria</taxon>
        <taxon>Pseudomonadati</taxon>
        <taxon>Pseudomonadota</taxon>
        <taxon>Betaproteobacteria</taxon>
        <taxon>Burkholderiales</taxon>
        <taxon>Sphaerotilaceae</taxon>
        <taxon>Ideonella</taxon>
    </lineage>
</organism>
<keyword id="KW-0249">Electron transport</keyword>
<keyword id="KW-0349">Heme</keyword>
<keyword id="KW-0408">Iron</keyword>
<keyword id="KW-0479">Metal-binding</keyword>
<keyword id="KW-0574">Periplasm</keyword>
<keyword id="KW-0732">Signal</keyword>
<keyword id="KW-0813">Transport</keyword>
<evidence type="ECO:0000255" key="1"/>
<evidence type="ECO:0000305" key="2"/>
<proteinExistence type="evidence at protein level"/>
<reference key="1">
    <citation type="journal article" date="2003" name="Appl. Environ. Microbiol.">
        <title>A gene cluster for chlorate metabolism in Ideonella dechloratans.</title>
        <authorList>
            <person name="Danielsson Thorell H."/>
            <person name="Stenklo K."/>
            <person name="Karlsson J."/>
            <person name="Nilsson T."/>
        </authorList>
    </citation>
    <scope>NUCLEOTIDE SEQUENCE [GENOMIC DNA]</scope>
    <scope>CHARACTERIZATION</scope>
</reference>
<accession>P60000</accession>
<feature type="signal peptide" evidence="1">
    <location>
        <begin position="1"/>
        <end position="27"/>
    </location>
</feature>
<feature type="chain" id="PRO_0000020948" description="Chlorate reductase subunit gamma">
    <location>
        <begin position="28"/>
        <end position="239"/>
    </location>
</feature>
<feature type="binding site" description="axial binding residue" evidence="1">
    <location>
        <position position="74"/>
    </location>
    <ligand>
        <name>heme b</name>
        <dbReference type="ChEBI" id="CHEBI:60344"/>
    </ligand>
    <ligandPart>
        <name>Fe</name>
        <dbReference type="ChEBI" id="CHEBI:18248"/>
    </ligandPart>
</feature>
<feature type="binding site" description="axial binding residue" evidence="1">
    <location>
        <position position="138"/>
    </location>
    <ligand>
        <name>heme b</name>
        <dbReference type="ChEBI" id="CHEBI:60344"/>
    </ligand>
    <ligandPart>
        <name>Fe</name>
        <dbReference type="ChEBI" id="CHEBI:18248"/>
    </ligandPart>
</feature>
<dbReference type="EMBL" id="AJ566363">
    <property type="protein sequence ID" value="CAD97450.1"/>
    <property type="molecule type" value="Genomic_DNA"/>
</dbReference>
<dbReference type="SMR" id="P60000"/>
<dbReference type="TCDB" id="5.A.3.8.2">
    <property type="family name" value="the prokaryotic molybdopterin-containing oxidoreductase (pmo) family"/>
</dbReference>
<dbReference type="BioCyc" id="MetaCyc:MONOMER-15699"/>
<dbReference type="BRENDA" id="1.97.1.1">
    <property type="organism ID" value="2756"/>
</dbReference>
<dbReference type="GO" id="GO:0042597">
    <property type="term" value="C:periplasmic space"/>
    <property type="evidence" value="ECO:0007669"/>
    <property type="project" value="UniProtKB-SubCell"/>
</dbReference>
<dbReference type="GO" id="GO:0020037">
    <property type="term" value="F:heme binding"/>
    <property type="evidence" value="ECO:0007669"/>
    <property type="project" value="InterPro"/>
</dbReference>
<dbReference type="GO" id="GO:0046872">
    <property type="term" value="F:metal ion binding"/>
    <property type="evidence" value="ECO:0007669"/>
    <property type="project" value="UniProtKB-KW"/>
</dbReference>
<dbReference type="CDD" id="cd09623">
    <property type="entry name" value="DOMON_EBDH"/>
    <property type="match status" value="1"/>
</dbReference>
<dbReference type="Gene3D" id="2.60.40.1190">
    <property type="match status" value="1"/>
</dbReference>
<dbReference type="InterPro" id="IPR019020">
    <property type="entry name" value="Cyt-c552/DMSO_Rdtase_haem-bd"/>
</dbReference>
<dbReference type="InterPro" id="IPR017838">
    <property type="entry name" value="DMSO_Rdtase_II_haem_b-bd_su"/>
</dbReference>
<dbReference type="NCBIfam" id="TIGR03477">
    <property type="entry name" value="DMSO_red_II_gam"/>
    <property type="match status" value="1"/>
</dbReference>
<dbReference type="Pfam" id="PF09459">
    <property type="entry name" value="EB_dh"/>
    <property type="match status" value="1"/>
</dbReference>
<dbReference type="SMART" id="SM00887">
    <property type="entry name" value="EB_dh"/>
    <property type="match status" value="1"/>
</dbReference>
<gene>
    <name type="primary">clrC</name>
</gene>
<name>CLRC_IDEDE</name>
<protein>
    <recommendedName>
        <fullName>Chlorate reductase subunit gamma</fullName>
    </recommendedName>
    <alternativeName>
        <fullName>Chlorate reductase heme subunit</fullName>
    </alternativeName>
</protein>
<sequence>MKTNILVKRMAVIGLAVAAACTGAAAAAQGAVPQAQRIIRVLSVAGGDAASPQAAVWKKAPTTQVTLLTAFPGHISIVGTAATQKLAAQAVRASGRLFVRLAWSDRTANTVMKDTDQFLDGAAVEFPVNGKVATLPFMGDPVNVVNVWHWRADGRTLNLLAKGFGTSTPVPTEDLRSASVRTGDGWEVVLSRPLRVKAEEGANLQGRRTMPIGFAAWDGENQERDGLKAVTMEWWQLRF</sequence>